<protein>
    <recommendedName>
        <fullName>Alcohol dehydrogenase-related 31 kDa protein</fullName>
    </recommendedName>
</protein>
<proteinExistence type="inferred from homology"/>
<name>ADHR_DROMA</name>
<feature type="chain" id="PRO_0000054507" description="Alcohol dehydrogenase-related 31 kDa protein">
    <location>
        <begin position="1"/>
        <end position="272" status="greater than"/>
    </location>
</feature>
<feature type="active site" description="Proton acceptor" evidence="2">
    <location>
        <position position="152"/>
    </location>
</feature>
<feature type="binding site" evidence="1">
    <location>
        <begin position="11"/>
        <end position="34"/>
    </location>
    <ligand>
        <name>NAD(+)</name>
        <dbReference type="ChEBI" id="CHEBI:57540"/>
    </ligand>
</feature>
<feature type="binding site" evidence="1">
    <location>
        <position position="139"/>
    </location>
    <ligand>
        <name>substrate</name>
    </ligand>
</feature>
<feature type="non-terminal residue">
    <location>
        <position position="272"/>
    </location>
</feature>
<dbReference type="EMBL" id="M19264">
    <property type="status" value="NOT_ANNOTATED_CDS"/>
    <property type="molecule type" value="Genomic_DNA"/>
</dbReference>
<dbReference type="SMR" id="P26620"/>
<dbReference type="Proteomes" id="UP000515162">
    <property type="component" value="Unplaced"/>
</dbReference>
<dbReference type="GO" id="GO:0005737">
    <property type="term" value="C:cytoplasm"/>
    <property type="evidence" value="ECO:0007669"/>
    <property type="project" value="TreeGrafter"/>
</dbReference>
<dbReference type="GO" id="GO:0016491">
    <property type="term" value="F:oxidoreductase activity"/>
    <property type="evidence" value="ECO:0007669"/>
    <property type="project" value="UniProtKB-KW"/>
</dbReference>
<dbReference type="CDD" id="cd05323">
    <property type="entry name" value="ADH_SDR_c_like"/>
    <property type="match status" value="1"/>
</dbReference>
<dbReference type="Gene3D" id="3.40.50.720">
    <property type="entry name" value="NAD(P)-binding Rossmann-like Domain"/>
    <property type="match status" value="1"/>
</dbReference>
<dbReference type="InterPro" id="IPR002427">
    <property type="entry name" value="ADH-rel"/>
</dbReference>
<dbReference type="InterPro" id="IPR036291">
    <property type="entry name" value="NAD(P)-bd_dom_sf"/>
</dbReference>
<dbReference type="InterPro" id="IPR020904">
    <property type="entry name" value="Sc_DH/Rdtase_CS"/>
</dbReference>
<dbReference type="InterPro" id="IPR002347">
    <property type="entry name" value="SDR_fam"/>
</dbReference>
<dbReference type="PANTHER" id="PTHR44229">
    <property type="entry name" value="15-HYDROXYPROSTAGLANDIN DEHYDROGENASE [NAD(+)]"/>
    <property type="match status" value="1"/>
</dbReference>
<dbReference type="PANTHER" id="PTHR44229:SF8">
    <property type="entry name" value="ALCOHOL DEHYDROGENASE-RELATED"/>
    <property type="match status" value="1"/>
</dbReference>
<dbReference type="Pfam" id="PF00106">
    <property type="entry name" value="adh_short"/>
    <property type="match status" value="1"/>
</dbReference>
<dbReference type="PRINTS" id="PR01170">
    <property type="entry name" value="ADHRELATED"/>
</dbReference>
<dbReference type="PRINTS" id="PR01167">
    <property type="entry name" value="INSADHFAMILY"/>
</dbReference>
<dbReference type="PRINTS" id="PR00080">
    <property type="entry name" value="SDRFAMILY"/>
</dbReference>
<dbReference type="SUPFAM" id="SSF51735">
    <property type="entry name" value="NAD(P)-binding Rossmann-fold domains"/>
    <property type="match status" value="1"/>
</dbReference>
<dbReference type="PROSITE" id="PS00061">
    <property type="entry name" value="ADH_SHORT"/>
    <property type="match status" value="1"/>
</dbReference>
<keyword id="KW-0560">Oxidoreductase</keyword>
<organism>
    <name type="scientific">Drosophila mauritiana</name>
    <name type="common">Fruit fly</name>
    <dbReference type="NCBI Taxonomy" id="7226"/>
    <lineage>
        <taxon>Eukaryota</taxon>
        <taxon>Metazoa</taxon>
        <taxon>Ecdysozoa</taxon>
        <taxon>Arthropoda</taxon>
        <taxon>Hexapoda</taxon>
        <taxon>Insecta</taxon>
        <taxon>Pterygota</taxon>
        <taxon>Neoptera</taxon>
        <taxon>Endopterygota</taxon>
        <taxon>Diptera</taxon>
        <taxon>Brachycera</taxon>
        <taxon>Muscomorpha</taxon>
        <taxon>Ephydroidea</taxon>
        <taxon>Drosophilidae</taxon>
        <taxon>Drosophila</taxon>
        <taxon>Sophophora</taxon>
    </lineage>
</organism>
<comment type="similarity">
    <text evidence="3">Belongs to the short-chain dehydrogenases/reductases (SDR) family.</text>
</comment>
<sequence>MFDLTGKHVCYVADCGGIALETSKVLMTKNIAKLAILQSTENPQAIAQLQSIKPSTQIFFWTYDVTMAREEMKKYFDEVMVQMDYIDVLINGATLCDENNIDATINTNLTGMMNTVATVLPYMDRKMGGSGGLIVNVTSVIGLDPSPVFCAYSASKFGVIGFTRSLADPLYYSQNGVAVMAVCCGPTRVFVDRELKAFLEYGQSFADRLRRAPCQSTSVCGQNIVNAIERSENGQIWIADKGGLELVKLHWYWHMADQFVHYMQSNDEEDQD</sequence>
<gene>
    <name type="primary">Adhr</name>
    <name type="synonym">Adh-dup</name>
</gene>
<evidence type="ECO:0000250" key="1"/>
<evidence type="ECO:0000255" key="2">
    <source>
        <dbReference type="PROSITE-ProRule" id="PRU10001"/>
    </source>
</evidence>
<evidence type="ECO:0000305" key="3"/>
<reference key="1">
    <citation type="journal article" date="1988" name="Mol. Biol. Evol.">
        <title>Organization and evolution of the alcohol dehydrogenase gene in Drosophila.</title>
        <authorList>
            <person name="Cohn V.H."/>
            <person name="Moore G.P."/>
        </authorList>
    </citation>
    <scope>NUCLEOTIDE SEQUENCE [GENOMIC DNA]</scope>
</reference>
<accession>P26620</accession>